<accession>A4YEH8</accession>
<feature type="chain" id="PRO_1000078065" description="Translation initiation factor 1A">
    <location>
        <begin position="1"/>
        <end position="108"/>
    </location>
</feature>
<feature type="domain" description="S1-like" evidence="1">
    <location>
        <begin position="11"/>
        <end position="85"/>
    </location>
</feature>
<protein>
    <recommendedName>
        <fullName evidence="1">Translation initiation factor 1A</fullName>
        <shortName evidence="1">aIF-1A</shortName>
    </recommendedName>
</protein>
<name>IF1A_METS5</name>
<comment type="function">
    <text evidence="1">Seems to be required for maximal rate of protein biosynthesis. Enhances ribosome dissociation into subunits and stabilizes the binding of the initiator Met-tRNA(I) to 40 S ribosomal subunits.</text>
</comment>
<comment type="similarity">
    <text evidence="1">Belongs to the eIF-1A family.</text>
</comment>
<sequence>MPKKDRTDQAPSKDVPKPEEGEVICVVKKMLGAEHIIIACLDGKERTARIPGRMRKKTWIKEGDVVLAAPWDFQPTKADIVYRYMNDEIRKLIEEKVISRDVIDQLRG</sequence>
<gene>
    <name type="primary">eIF1A</name>
    <name type="ordered locus">Msed_0655</name>
</gene>
<reference key="1">
    <citation type="journal article" date="2008" name="Appl. Environ. Microbiol.">
        <title>The genome sequence of the metal-mobilizing, extremely thermoacidophilic archaeon Metallosphaera sedula provides insights into bioleaching-associated metabolism.</title>
        <authorList>
            <person name="Auernik K.S."/>
            <person name="Maezato Y."/>
            <person name="Blum P.H."/>
            <person name="Kelly R.M."/>
        </authorList>
    </citation>
    <scope>NUCLEOTIDE SEQUENCE [LARGE SCALE GENOMIC DNA]</scope>
    <source>
        <strain>ATCC 51363 / DSM 5348 / JCM 9185 / NBRC 15509 / TH2</strain>
    </source>
</reference>
<dbReference type="EMBL" id="CP000682">
    <property type="protein sequence ID" value="ABP94830.1"/>
    <property type="molecule type" value="Genomic_DNA"/>
</dbReference>
<dbReference type="RefSeq" id="WP_012020617.1">
    <property type="nucleotide sequence ID" value="NZ_CP139956.1"/>
</dbReference>
<dbReference type="SMR" id="A4YEH8"/>
<dbReference type="STRING" id="399549.Msed_0655"/>
<dbReference type="KEGG" id="mse:Msed_0655"/>
<dbReference type="eggNOG" id="arCOG01179">
    <property type="taxonomic scope" value="Archaea"/>
</dbReference>
<dbReference type="HOGENOM" id="CLU_109098_1_2_2"/>
<dbReference type="Proteomes" id="UP000000242">
    <property type="component" value="Chromosome"/>
</dbReference>
<dbReference type="GO" id="GO:0003723">
    <property type="term" value="F:RNA binding"/>
    <property type="evidence" value="ECO:0007669"/>
    <property type="project" value="InterPro"/>
</dbReference>
<dbReference type="GO" id="GO:0003743">
    <property type="term" value="F:translation initiation factor activity"/>
    <property type="evidence" value="ECO:0007669"/>
    <property type="project" value="UniProtKB-UniRule"/>
</dbReference>
<dbReference type="CDD" id="cd05793">
    <property type="entry name" value="S1_IF1A"/>
    <property type="match status" value="1"/>
</dbReference>
<dbReference type="Gene3D" id="2.40.50.140">
    <property type="entry name" value="Nucleic acid-binding proteins"/>
    <property type="match status" value="1"/>
</dbReference>
<dbReference type="HAMAP" id="MF_00216">
    <property type="entry name" value="aIF_1A"/>
    <property type="match status" value="1"/>
</dbReference>
<dbReference type="InterPro" id="IPR012340">
    <property type="entry name" value="NA-bd_OB-fold"/>
</dbReference>
<dbReference type="InterPro" id="IPR006196">
    <property type="entry name" value="RNA-binding_domain_S1_IF1"/>
</dbReference>
<dbReference type="InterPro" id="IPR001253">
    <property type="entry name" value="TIF_eIF-1A"/>
</dbReference>
<dbReference type="InterPro" id="IPR018104">
    <property type="entry name" value="TIF_eIF-1A_CS"/>
</dbReference>
<dbReference type="NCBIfam" id="TIGR00523">
    <property type="entry name" value="eIF-1A"/>
    <property type="match status" value="1"/>
</dbReference>
<dbReference type="NCBIfam" id="NF003082">
    <property type="entry name" value="PRK04012.1-1"/>
    <property type="match status" value="1"/>
</dbReference>
<dbReference type="NCBIfam" id="NF003084">
    <property type="entry name" value="PRK04012.1-3"/>
    <property type="match status" value="1"/>
</dbReference>
<dbReference type="NCBIfam" id="NF003085">
    <property type="entry name" value="PRK04012.1-5"/>
    <property type="match status" value="1"/>
</dbReference>
<dbReference type="PANTHER" id="PTHR21668">
    <property type="entry name" value="EIF-1A"/>
    <property type="match status" value="1"/>
</dbReference>
<dbReference type="Pfam" id="PF01176">
    <property type="entry name" value="eIF-1a"/>
    <property type="match status" value="1"/>
</dbReference>
<dbReference type="SMART" id="SM00652">
    <property type="entry name" value="eIF1a"/>
    <property type="match status" value="1"/>
</dbReference>
<dbReference type="SUPFAM" id="SSF50249">
    <property type="entry name" value="Nucleic acid-binding proteins"/>
    <property type="match status" value="1"/>
</dbReference>
<dbReference type="PROSITE" id="PS01262">
    <property type="entry name" value="IF1A"/>
    <property type="match status" value="1"/>
</dbReference>
<dbReference type="PROSITE" id="PS50832">
    <property type="entry name" value="S1_IF1_TYPE"/>
    <property type="match status" value="1"/>
</dbReference>
<keyword id="KW-0396">Initiation factor</keyword>
<keyword id="KW-0648">Protein biosynthesis</keyword>
<keyword id="KW-1185">Reference proteome</keyword>
<proteinExistence type="inferred from homology"/>
<organism>
    <name type="scientific">Metallosphaera sedula (strain ATCC 51363 / DSM 5348 / JCM 9185 / NBRC 15509 / TH2)</name>
    <dbReference type="NCBI Taxonomy" id="399549"/>
    <lineage>
        <taxon>Archaea</taxon>
        <taxon>Thermoproteota</taxon>
        <taxon>Thermoprotei</taxon>
        <taxon>Sulfolobales</taxon>
        <taxon>Sulfolobaceae</taxon>
        <taxon>Metallosphaera</taxon>
    </lineage>
</organism>
<evidence type="ECO:0000255" key="1">
    <source>
        <dbReference type="HAMAP-Rule" id="MF_00216"/>
    </source>
</evidence>